<evidence type="ECO:0000255" key="1">
    <source>
        <dbReference type="HAMAP-Rule" id="MF_00691"/>
    </source>
</evidence>
<proteinExistence type="inferred from homology"/>
<name>PXPA_LIMF3</name>
<keyword id="KW-0067">ATP-binding</keyword>
<keyword id="KW-0378">Hydrolase</keyword>
<keyword id="KW-0547">Nucleotide-binding</keyword>
<keyword id="KW-1185">Reference proteome</keyword>
<dbReference type="EC" id="3.5.2.9" evidence="1"/>
<dbReference type="EMBL" id="AP008937">
    <property type="protein sequence ID" value="BAG27948.1"/>
    <property type="molecule type" value="Genomic_DNA"/>
</dbReference>
<dbReference type="RefSeq" id="WP_012391660.1">
    <property type="nucleotide sequence ID" value="NC_010610.1"/>
</dbReference>
<dbReference type="SMR" id="B2GE66"/>
<dbReference type="KEGG" id="lfe:LAF_1612"/>
<dbReference type="PATRIC" id="fig|334390.5.peg.1773"/>
<dbReference type="eggNOG" id="COG1540">
    <property type="taxonomic scope" value="Bacteria"/>
</dbReference>
<dbReference type="HOGENOM" id="CLU_069535_0_0_9"/>
<dbReference type="Proteomes" id="UP000001697">
    <property type="component" value="Chromosome"/>
</dbReference>
<dbReference type="GO" id="GO:0017168">
    <property type="term" value="F:5-oxoprolinase (ATP-hydrolyzing) activity"/>
    <property type="evidence" value="ECO:0007669"/>
    <property type="project" value="UniProtKB-UniRule"/>
</dbReference>
<dbReference type="GO" id="GO:0005524">
    <property type="term" value="F:ATP binding"/>
    <property type="evidence" value="ECO:0007669"/>
    <property type="project" value="UniProtKB-UniRule"/>
</dbReference>
<dbReference type="GO" id="GO:0005975">
    <property type="term" value="P:carbohydrate metabolic process"/>
    <property type="evidence" value="ECO:0007669"/>
    <property type="project" value="InterPro"/>
</dbReference>
<dbReference type="CDD" id="cd10787">
    <property type="entry name" value="LamB_YcsF_like"/>
    <property type="match status" value="1"/>
</dbReference>
<dbReference type="Gene3D" id="3.20.20.370">
    <property type="entry name" value="Glycoside hydrolase/deacetylase"/>
    <property type="match status" value="1"/>
</dbReference>
<dbReference type="HAMAP" id="MF_00691">
    <property type="entry name" value="PxpA"/>
    <property type="match status" value="1"/>
</dbReference>
<dbReference type="InterPro" id="IPR011330">
    <property type="entry name" value="Glyco_hydro/deAcase_b/a-brl"/>
</dbReference>
<dbReference type="InterPro" id="IPR005501">
    <property type="entry name" value="LamB/YcsF/PxpA-like"/>
</dbReference>
<dbReference type="NCBIfam" id="NF003814">
    <property type="entry name" value="PRK05406.1-3"/>
    <property type="match status" value="1"/>
</dbReference>
<dbReference type="NCBIfam" id="NF003816">
    <property type="entry name" value="PRK05406.1-5"/>
    <property type="match status" value="1"/>
</dbReference>
<dbReference type="PANTHER" id="PTHR30292:SF0">
    <property type="entry name" value="5-OXOPROLINASE SUBUNIT A"/>
    <property type="match status" value="1"/>
</dbReference>
<dbReference type="PANTHER" id="PTHR30292">
    <property type="entry name" value="UNCHARACTERIZED PROTEIN YBGL-RELATED"/>
    <property type="match status" value="1"/>
</dbReference>
<dbReference type="Pfam" id="PF03746">
    <property type="entry name" value="LamB_YcsF"/>
    <property type="match status" value="1"/>
</dbReference>
<dbReference type="SUPFAM" id="SSF88713">
    <property type="entry name" value="Glycoside hydrolase/deacetylase"/>
    <property type="match status" value="1"/>
</dbReference>
<sequence>MTRIDLNSDLGESFGRYTIGNDDQVLDLITAANVACGFHAGDPDVMAQTVALAETKGVAIGAHPGFPDLGGFGRRKLDMTPAEVKNMVTYQVSALMGFTKDHRLHHVKPHGALYNAAAKDLALARAICEGVAQVDDQLPLYGLAGSQLLEAAKEVGLPAYSEVFADRGYQADGSLVPRSQPNAVLTDPLAVAERALSMVQTQSVTAVTGETVPLKVDTICVHGDNQAALALVDQLRQTFTANGITIQAC</sequence>
<comment type="function">
    <text evidence="1">Catalyzes the cleavage of 5-oxoproline to form L-glutamate coupled to the hydrolysis of ATP to ADP and inorganic phosphate.</text>
</comment>
<comment type="catalytic activity">
    <reaction evidence="1">
        <text>5-oxo-L-proline + ATP + 2 H2O = L-glutamate + ADP + phosphate + H(+)</text>
        <dbReference type="Rhea" id="RHEA:10348"/>
        <dbReference type="ChEBI" id="CHEBI:15377"/>
        <dbReference type="ChEBI" id="CHEBI:15378"/>
        <dbReference type="ChEBI" id="CHEBI:29985"/>
        <dbReference type="ChEBI" id="CHEBI:30616"/>
        <dbReference type="ChEBI" id="CHEBI:43474"/>
        <dbReference type="ChEBI" id="CHEBI:58402"/>
        <dbReference type="ChEBI" id="CHEBI:456216"/>
        <dbReference type="EC" id="3.5.2.9"/>
    </reaction>
</comment>
<comment type="subunit">
    <text evidence="1">Forms a complex composed of PxpA, PxpB and PxpC.</text>
</comment>
<comment type="similarity">
    <text evidence="1">Belongs to the LamB/PxpA family.</text>
</comment>
<gene>
    <name evidence="1" type="primary">pxpA</name>
    <name type="ordered locus">LAF_1612</name>
</gene>
<feature type="chain" id="PRO_1000132063" description="5-oxoprolinase subunit A">
    <location>
        <begin position="1"/>
        <end position="249"/>
    </location>
</feature>
<protein>
    <recommendedName>
        <fullName evidence="1">5-oxoprolinase subunit A</fullName>
        <shortName evidence="1">5-OPase subunit A</shortName>
        <ecNumber evidence="1">3.5.2.9</ecNumber>
    </recommendedName>
    <alternativeName>
        <fullName evidence="1">5-oxoprolinase (ATP-hydrolyzing) subunit A</fullName>
    </alternativeName>
</protein>
<accession>B2GE66</accession>
<organism>
    <name type="scientific">Limosilactobacillus fermentum (strain NBRC 3956 / LMG 18251)</name>
    <name type="common">Lactobacillus fermentum</name>
    <dbReference type="NCBI Taxonomy" id="334390"/>
    <lineage>
        <taxon>Bacteria</taxon>
        <taxon>Bacillati</taxon>
        <taxon>Bacillota</taxon>
        <taxon>Bacilli</taxon>
        <taxon>Lactobacillales</taxon>
        <taxon>Lactobacillaceae</taxon>
        <taxon>Limosilactobacillus</taxon>
    </lineage>
</organism>
<reference key="1">
    <citation type="journal article" date="2008" name="DNA Res.">
        <title>Comparative genome analysis of Lactobacillus reuteri and Lactobacillus fermentum reveal a genomic island for reuterin and cobalamin production.</title>
        <authorList>
            <person name="Morita H."/>
            <person name="Toh H."/>
            <person name="Fukuda S."/>
            <person name="Horikawa H."/>
            <person name="Oshima K."/>
            <person name="Suzuki T."/>
            <person name="Murakami M."/>
            <person name="Hisamatsu S."/>
            <person name="Kato Y."/>
            <person name="Takizawa T."/>
            <person name="Fukuoka H."/>
            <person name="Yoshimura T."/>
            <person name="Itoh K."/>
            <person name="O'Sullivan D.J."/>
            <person name="McKay L.L."/>
            <person name="Ohno H."/>
            <person name="Kikuchi J."/>
            <person name="Masaoka T."/>
            <person name="Hattori M."/>
        </authorList>
    </citation>
    <scope>NUCLEOTIDE SEQUENCE [LARGE SCALE GENOMIC DNA]</scope>
    <source>
        <strain>NBRC 3956 / LMG 18251</strain>
    </source>
</reference>